<name>TADBP_CAEEL</name>
<comment type="function">
    <text evidence="3 4 5 6">RNA-binding protein which regulates transcription, splicing and RNA-editing (PubMed:25391662). Limits the accumulation of double-stranded RNA by maintaining the abundance of the mature RNA transcripts that are formed from double-stranded precursor RNAs (PubMed:25391662). Stress response protein that acts downstream of daf-16 in the insulin/IGF pathway to regulate longevity and the cellular stress response to osmotic, oxidative, proteotoxic and endoplasmic reticulum stress (PubMed:22232551, PubMed:22792076). Involved in the regulation of physiological processes including aging, fertility, growth and locomotion (PubMed:22232551, PubMed:29760282). Plays a role in maintaining localization of chromobox protein homolog hpl-2 to gene bodies, perhaps acting via binding to nascent RNA transcripts (PubMed:29760282).</text>
</comment>
<comment type="subunit">
    <text evidence="6">Interacts with chromobox protein homolog hpl-2; interaction may maintain localization of hpl-2 to gene bodies.</text>
</comment>
<comment type="interaction">
    <interactant intactId="EBI-311955">
        <id>D0VWM8</id>
    </interactant>
    <interactant intactId="EBI-311961">
        <id>Q9XVS2</id>
        <label>sup-46</label>
    </interactant>
    <organismsDiffer>false</organismsDiffer>
    <experiments>2</experiments>
</comment>
<comment type="subcellular location">
    <subcellularLocation>
        <location evidence="4">Nucleus</location>
    </subcellularLocation>
    <subcellularLocation>
        <location evidence="4">Cytoplasm</location>
    </subcellularLocation>
    <text evidence="4">Shuttles from the nucleus to the cytoplasm under stress conditions.</text>
</comment>
<comment type="alternative products">
    <event type="alternative splicing"/>
    <isoform>
        <id>D0VWM8-1</id>
        <name evidence="10">c</name>
        <sequence type="displayed"/>
    </isoform>
    <isoform>
        <id>D0VWM8-2</id>
        <name evidence="9">a</name>
        <sequence type="described" ref="VSP_057752"/>
    </isoform>
</comment>
<comment type="tissue specificity">
    <text evidence="3 4">Widely expressed in a range of tissues including body wall muscles, pharynx and neurons of the midbody in adults and larvae (PubMed:22232551, PubMed:22792076).</text>
</comment>
<comment type="induction">
    <text evidence="4">By hyperosmotic, oxidative and endoplasmic reticulum stress (at protein level).</text>
</comment>
<comment type="disruption phenotype">
    <text evidence="3 4 5">Increased lifespan, slower growth rate, reduced egg-laying and reduced fertility (PubMed:22232551, PubMed:22792076). Defective locomotion and chemotaxis (PubMed:22232551, PubMed:25391662). Increased sensitivity to osmotic and oxidative stress (PubMed:22792076). Increased intronic A-to-I RNA editing and splicing abnormalities, which may contribute to the increased accumulation of double-stranded RNA observed in the nucleus of multiple tissues including gut, muscle and the anterior head region (PubMed:25391662).</text>
</comment>
<evidence type="ECO:0000255" key="1">
    <source>
        <dbReference type="PROSITE-ProRule" id="PRU00176"/>
    </source>
</evidence>
<evidence type="ECO:0000256" key="2">
    <source>
        <dbReference type="SAM" id="MobiDB-lite"/>
    </source>
</evidence>
<evidence type="ECO:0000269" key="3">
    <source>
    </source>
</evidence>
<evidence type="ECO:0000269" key="4">
    <source>
    </source>
</evidence>
<evidence type="ECO:0000269" key="5">
    <source>
    </source>
</evidence>
<evidence type="ECO:0000269" key="6">
    <source>
    </source>
</evidence>
<evidence type="ECO:0000305" key="7"/>
<evidence type="ECO:0000312" key="8">
    <source>
        <dbReference type="Proteomes" id="UP000001940"/>
    </source>
</evidence>
<evidence type="ECO:0000312" key="9">
    <source>
        <dbReference type="WormBase" id="F44G4.4a"/>
    </source>
</evidence>
<evidence type="ECO:0000312" key="10">
    <source>
        <dbReference type="WormBase" id="F44G4.4c"/>
    </source>
</evidence>
<reference evidence="8" key="1">
    <citation type="journal article" date="1998" name="Science">
        <title>Genome sequence of the nematode C. elegans: a platform for investigating biology.</title>
        <authorList>
            <consortium name="The C. elegans sequencing consortium"/>
        </authorList>
    </citation>
    <scope>NUCLEOTIDE SEQUENCE [LARGE SCALE GENOMIC DNA]</scope>
    <source>
        <strain evidence="8">Bristol N2</strain>
    </source>
</reference>
<reference evidence="7" key="2">
    <citation type="journal article" date="2012" name="J. Biol. Chem.">
        <title>Caenorhabditis elegans RNA-processing protein TDP-1 regulates protein homeostasis and life span.</title>
        <authorList>
            <person name="Zhang T."/>
            <person name="Hwang H.Y."/>
            <person name="Hao H."/>
            <person name="Talbot C. Jr."/>
            <person name="Wang J."/>
        </authorList>
    </citation>
    <scope>FUNCTION</scope>
    <scope>TISSUE SPECIFICITY</scope>
    <scope>DISRUPTION PHENOTYPE</scope>
</reference>
<reference evidence="7" key="3">
    <citation type="journal article" date="2012" name="PLoS Genet.">
        <title>TDP-1/TDP-43 regulates stress signaling and age-dependent proteotoxicity in Caenorhabditis elegans.</title>
        <authorList>
            <person name="Vaccaro A."/>
            <person name="Tauffenberger A."/>
            <person name="Ash P.E."/>
            <person name="Carlomagno Y."/>
            <person name="Petrucelli L."/>
            <person name="Parker J.A."/>
        </authorList>
    </citation>
    <scope>FUNCTION</scope>
    <scope>INDUCTION</scope>
    <scope>SUBCELLULAR LOCATION</scope>
    <scope>TISSUE SPECIFICITY</scope>
    <scope>DISRUPTION PHENOTYPE</scope>
</reference>
<reference evidence="7" key="4">
    <citation type="journal article" date="2014" name="EMBO J.">
        <title>TDP-1, the Caenorhabditis elegans ortholog of TDP-43, limits the accumulation of double-stranded RNA.</title>
        <authorList>
            <person name="Saldi T.K."/>
            <person name="Ash P.E."/>
            <person name="Wilson G."/>
            <person name="Gonzales P."/>
            <person name="Garrido-Lecca A."/>
            <person name="Roberts C.M."/>
            <person name="Dostal V."/>
            <person name="Gendron T.F."/>
            <person name="Stein L.D."/>
            <person name="Blumenthal T."/>
            <person name="Petrucelli L."/>
            <person name="Link C.D."/>
        </authorList>
    </citation>
    <scope>FUNCTION</scope>
    <scope>DISRUPTION PHENOTYPE</scope>
</reference>
<reference key="5">
    <citation type="journal article" date="2018" name="Mol. Cell. Biol.">
        <title>The Caenorhabditis elegans Ortholog of TDP-43 Regulates the Chromatin Localization of the Heterochromatin Protein 1 Homolog HPL-2.</title>
        <authorList>
            <person name="Saldi T.K."/>
            <person name="Gonzales P."/>
            <person name="Garrido-Lecca A."/>
            <person name="Dostal V."/>
            <person name="Roberts C.M."/>
            <person name="Petrucelli L."/>
            <person name="Link C.D."/>
        </authorList>
    </citation>
    <scope>FUNCTION</scope>
    <scope>INTERACTION WITH HPL-2</scope>
</reference>
<gene>
    <name evidence="10" type="primary">tdp-1</name>
    <name evidence="10" type="ORF">F44G4.4</name>
</gene>
<feature type="chain" id="PRO_0000433365" description="Tar DNA-binding protein homolog 1" evidence="7">
    <location>
        <begin position="1"/>
        <end position="414"/>
    </location>
</feature>
<feature type="domain" description="RRM 1" evidence="1">
    <location>
        <begin position="173"/>
        <end position="259"/>
    </location>
</feature>
<feature type="domain" description="RRM 2" evidence="1">
    <location>
        <begin position="262"/>
        <end position="341"/>
    </location>
</feature>
<feature type="region of interest" description="Disordered" evidence="2">
    <location>
        <begin position="1"/>
        <end position="58"/>
    </location>
</feature>
<feature type="region of interest" description="Disordered" evidence="2">
    <location>
        <begin position="132"/>
        <end position="167"/>
    </location>
</feature>
<feature type="region of interest" description="Disordered" evidence="2">
    <location>
        <begin position="343"/>
        <end position="414"/>
    </location>
</feature>
<feature type="compositionally biased region" description="Basic and acidic residues" evidence="2">
    <location>
        <begin position="1"/>
        <end position="44"/>
    </location>
</feature>
<feature type="compositionally biased region" description="Basic and acidic residues" evidence="2">
    <location>
        <begin position="153"/>
        <end position="167"/>
    </location>
</feature>
<feature type="compositionally biased region" description="Basic and acidic residues" evidence="2">
    <location>
        <begin position="361"/>
        <end position="373"/>
    </location>
</feature>
<feature type="splice variant" id="VSP_057752" description="In isoform a." evidence="7">
    <location>
        <begin position="251"/>
        <end position="253"/>
    </location>
</feature>
<organism evidence="8">
    <name type="scientific">Caenorhabditis elegans</name>
    <dbReference type="NCBI Taxonomy" id="6239"/>
    <lineage>
        <taxon>Eukaryota</taxon>
        <taxon>Metazoa</taxon>
        <taxon>Ecdysozoa</taxon>
        <taxon>Nematoda</taxon>
        <taxon>Chromadorea</taxon>
        <taxon>Rhabditida</taxon>
        <taxon>Rhabditina</taxon>
        <taxon>Rhabditomorpha</taxon>
        <taxon>Rhabditoidea</taxon>
        <taxon>Rhabditidae</taxon>
        <taxon>Peloderinae</taxon>
        <taxon>Caenorhabditis</taxon>
    </lineage>
</organism>
<sequence>MADETPKVKTEPAAEVKSPLDEVKEIRKEAELTQTGSDEKKTTDPEFITVQDPNGDEPIELPTVDGVVLMTTLQASFPGATGLKYKNPKTGANRAVQVDPSGLKLIAPADGWENKTFFVIVAPQSERVRALSSADATSAKRRKVGSSDDSDSDDGRDGRSGRKRAVERDSQPVDLIVLGVDFKTTDECFQKYFEDIGTVVFCEIKRKSDGNSKGFGFVRMSSVGEQNKVLAIPQHMIDGRRCDVKVPDGRSLQDKQGRPSISRIFVGRLTDKVDEHQLRKVFGDEAKSYIETAVVTDVFIPKPFRGFAFVTLSSAEAAERIVSKGSLTVNGLSVGLSIAQPREENNQSVGPDYGLPAGYRNRRERDRPDRRPIQNEAPLPMPFVRPPQDYSYRQQNSPLERRYWAPGDSRGPGW</sequence>
<keyword id="KW-0025">Alternative splicing</keyword>
<keyword id="KW-0963">Cytoplasm</keyword>
<keyword id="KW-0507">mRNA processing</keyword>
<keyword id="KW-0508">mRNA splicing</keyword>
<keyword id="KW-0539">Nucleus</keyword>
<keyword id="KW-1185">Reference proteome</keyword>
<keyword id="KW-0677">Repeat</keyword>
<keyword id="KW-0346">Stress response</keyword>
<keyword id="KW-0804">Transcription</keyword>
<keyword id="KW-0805">Transcription regulation</keyword>
<dbReference type="EMBL" id="BX284602">
    <property type="protein sequence ID" value="CAA90120.1"/>
    <property type="molecule type" value="Genomic_DNA"/>
</dbReference>
<dbReference type="EMBL" id="BX284602">
    <property type="protein sequence ID" value="CAH04715.1"/>
    <property type="molecule type" value="Genomic_DNA"/>
</dbReference>
<dbReference type="EMBL" id="BX284602">
    <property type="protein sequence ID" value="CBH29662.1"/>
    <property type="molecule type" value="Genomic_DNA"/>
</dbReference>
<dbReference type="PIR" id="T22207">
    <property type="entry name" value="T22207"/>
</dbReference>
<dbReference type="RefSeq" id="NP_001022166.1">
    <molecule id="D0VWM8-2"/>
    <property type="nucleotide sequence ID" value="NM_001026995.8"/>
</dbReference>
<dbReference type="RefSeq" id="NP_001254189.1">
    <molecule id="D0VWM8-1"/>
    <property type="nucleotide sequence ID" value="NM_001267260.3"/>
</dbReference>
<dbReference type="SMR" id="D0VWM8"/>
<dbReference type="DIP" id="DIP-26310N"/>
<dbReference type="FunCoup" id="D0VWM8">
    <property type="interactions" value="3636"/>
</dbReference>
<dbReference type="IntAct" id="D0VWM8">
    <property type="interactions" value="1"/>
</dbReference>
<dbReference type="STRING" id="6239.F44G4.4c.1"/>
<dbReference type="PaxDb" id="6239-F44G4.4c"/>
<dbReference type="PeptideAtlas" id="D0VWM8"/>
<dbReference type="EnsemblMetazoa" id="F44G4.4a.1">
    <molecule id="D0VWM8-2"/>
    <property type="protein sequence ID" value="F44G4.4a.1"/>
    <property type="gene ID" value="WBGene00006514"/>
</dbReference>
<dbReference type="EnsemblMetazoa" id="F44G4.4c.1">
    <molecule id="D0VWM8-1"/>
    <property type="protein sequence ID" value="F44G4.4c.1"/>
    <property type="gene ID" value="WBGene00006514"/>
</dbReference>
<dbReference type="GeneID" id="174436"/>
<dbReference type="KEGG" id="cel:CELE_F44G4.4"/>
<dbReference type="UCSC" id="F44G4.4a">
    <property type="organism name" value="c. elegans"/>
</dbReference>
<dbReference type="AGR" id="WB:WBGene00006514"/>
<dbReference type="CTD" id="174436"/>
<dbReference type="WormBase" id="F44G4.4a">
    <molecule id="D0VWM8-2"/>
    <property type="protein sequence ID" value="CE02231"/>
    <property type="gene ID" value="WBGene00006514"/>
    <property type="gene designation" value="tdp-1"/>
</dbReference>
<dbReference type="WormBase" id="F44G4.4c">
    <molecule id="D0VWM8-1"/>
    <property type="protein sequence ID" value="CE44236"/>
    <property type="gene ID" value="WBGene00006514"/>
    <property type="gene designation" value="tdp-1"/>
</dbReference>
<dbReference type="eggNOG" id="KOG0118">
    <property type="taxonomic scope" value="Eukaryota"/>
</dbReference>
<dbReference type="GeneTree" id="ENSGT00940000154343"/>
<dbReference type="HOGENOM" id="CLU_664372_0_0_1"/>
<dbReference type="InParanoid" id="D0VWM8"/>
<dbReference type="OMA" id="WGLINNI"/>
<dbReference type="OrthoDB" id="2020831at2759"/>
<dbReference type="PhylomeDB" id="D0VWM8"/>
<dbReference type="PRO" id="PR:D0VWM8"/>
<dbReference type="Proteomes" id="UP000001940">
    <property type="component" value="Chromosome II"/>
</dbReference>
<dbReference type="Bgee" id="WBGene00006514">
    <property type="expression patterns" value="Expressed in germ line (C elegans) and 4 other cell types or tissues"/>
</dbReference>
<dbReference type="GO" id="GO:0000785">
    <property type="term" value="C:chromatin"/>
    <property type="evidence" value="ECO:0000318"/>
    <property type="project" value="GO_Central"/>
</dbReference>
<dbReference type="GO" id="GO:0005737">
    <property type="term" value="C:cytoplasm"/>
    <property type="evidence" value="ECO:0007669"/>
    <property type="project" value="UniProtKB-SubCell"/>
</dbReference>
<dbReference type="GO" id="GO:0005654">
    <property type="term" value="C:nucleoplasm"/>
    <property type="evidence" value="ECO:0000318"/>
    <property type="project" value="GO_Central"/>
</dbReference>
<dbReference type="GO" id="GO:0005634">
    <property type="term" value="C:nucleus"/>
    <property type="evidence" value="ECO:0000314"/>
    <property type="project" value="WormBase"/>
</dbReference>
<dbReference type="GO" id="GO:0003682">
    <property type="term" value="F:chromatin binding"/>
    <property type="evidence" value="ECO:0000314"/>
    <property type="project" value="UniProtKB"/>
</dbReference>
<dbReference type="GO" id="GO:0003723">
    <property type="term" value="F:RNA binding"/>
    <property type="evidence" value="ECO:0000318"/>
    <property type="project" value="GO_Central"/>
</dbReference>
<dbReference type="GO" id="GO:0003727">
    <property type="term" value="F:single-stranded RNA binding"/>
    <property type="evidence" value="ECO:0000314"/>
    <property type="project" value="WormBase"/>
</dbReference>
<dbReference type="GO" id="GO:0008340">
    <property type="term" value="P:determination of adult lifespan"/>
    <property type="evidence" value="ECO:0000315"/>
    <property type="project" value="WormBase"/>
</dbReference>
<dbReference type="GO" id="GO:0006972">
    <property type="term" value="P:hyperosmotic response"/>
    <property type="evidence" value="ECO:0000315"/>
    <property type="project" value="WormBase"/>
</dbReference>
<dbReference type="GO" id="GO:0006397">
    <property type="term" value="P:mRNA processing"/>
    <property type="evidence" value="ECO:0007669"/>
    <property type="project" value="UniProtKB-KW"/>
</dbReference>
<dbReference type="GO" id="GO:0010628">
    <property type="term" value="P:positive regulation of gene expression"/>
    <property type="evidence" value="ECO:0000316"/>
    <property type="project" value="WormBase"/>
</dbReference>
<dbReference type="GO" id="GO:0010468">
    <property type="term" value="P:regulation of gene expression"/>
    <property type="evidence" value="ECO:0000318"/>
    <property type="project" value="GO_Central"/>
</dbReference>
<dbReference type="GO" id="GO:0006979">
    <property type="term" value="P:response to oxidative stress"/>
    <property type="evidence" value="ECO:0000315"/>
    <property type="project" value="WormBase"/>
</dbReference>
<dbReference type="GO" id="GO:0008380">
    <property type="term" value="P:RNA splicing"/>
    <property type="evidence" value="ECO:0000315"/>
    <property type="project" value="UniProtKB"/>
</dbReference>
<dbReference type="CDD" id="cd19609">
    <property type="entry name" value="NTD_TDP-43"/>
    <property type="match status" value="1"/>
</dbReference>
<dbReference type="FunFam" id="3.30.70.330:FF:001071">
    <property type="entry name" value="Tar DNA-binding protein homolog 1"/>
    <property type="match status" value="1"/>
</dbReference>
<dbReference type="Gene3D" id="3.30.70.330">
    <property type="match status" value="2"/>
</dbReference>
<dbReference type="InterPro" id="IPR012677">
    <property type="entry name" value="Nucleotide-bd_a/b_plait_sf"/>
</dbReference>
<dbReference type="InterPro" id="IPR035979">
    <property type="entry name" value="RBD_domain_sf"/>
</dbReference>
<dbReference type="InterPro" id="IPR000504">
    <property type="entry name" value="RRM_dom"/>
</dbReference>
<dbReference type="InterPro" id="IPR041105">
    <property type="entry name" value="TDP-43_N"/>
</dbReference>
<dbReference type="PANTHER" id="PTHR48033">
    <property type="entry name" value="RNA-BINDING (RRM/RBD/RNP MOTIFS) FAMILY PROTEIN"/>
    <property type="match status" value="1"/>
</dbReference>
<dbReference type="PANTHER" id="PTHR48033:SF9">
    <property type="entry name" value="TAR DNA-BINDING PROTEIN 43"/>
    <property type="match status" value="1"/>
</dbReference>
<dbReference type="Pfam" id="PF00076">
    <property type="entry name" value="RRM_1"/>
    <property type="match status" value="2"/>
</dbReference>
<dbReference type="Pfam" id="PF18694">
    <property type="entry name" value="TDP-43_N"/>
    <property type="match status" value="1"/>
</dbReference>
<dbReference type="SMART" id="SM00360">
    <property type="entry name" value="RRM"/>
    <property type="match status" value="2"/>
</dbReference>
<dbReference type="SUPFAM" id="SSF54928">
    <property type="entry name" value="RNA-binding domain, RBD"/>
    <property type="match status" value="2"/>
</dbReference>
<dbReference type="PROSITE" id="PS50102">
    <property type="entry name" value="RRM"/>
    <property type="match status" value="2"/>
</dbReference>
<accession>D0VWM8</accession>
<accession>Q20414</accession>
<accession>Q6BEV0</accession>
<protein>
    <recommendedName>
        <fullName evidence="10">Tar DNA-binding protein homolog 1</fullName>
    </recommendedName>
</protein>
<proteinExistence type="evidence at protein level"/>